<reference key="1">
    <citation type="journal article" date="2003" name="Proc. Natl. Acad. Sci. U.S.A.">
        <title>Complete genome sequence of Lactobacillus plantarum WCFS1.</title>
        <authorList>
            <person name="Kleerebezem M."/>
            <person name="Boekhorst J."/>
            <person name="van Kranenburg R."/>
            <person name="Molenaar D."/>
            <person name="Kuipers O.P."/>
            <person name="Leer R."/>
            <person name="Tarchini R."/>
            <person name="Peters S.A."/>
            <person name="Sandbrink H.M."/>
            <person name="Fiers M.W.E.J."/>
            <person name="Stiekema W."/>
            <person name="Klein Lankhorst R.M."/>
            <person name="Bron P.A."/>
            <person name="Hoffer S.M."/>
            <person name="Nierop Groot M.N."/>
            <person name="Kerkhoven R."/>
            <person name="De Vries M."/>
            <person name="Ursing B."/>
            <person name="De Vos W.M."/>
            <person name="Siezen R.J."/>
        </authorList>
    </citation>
    <scope>NUCLEOTIDE SEQUENCE [LARGE SCALE GENOMIC DNA]</scope>
    <source>
        <strain>ATCC BAA-793 / NCIMB 8826 / WCFS1</strain>
    </source>
</reference>
<reference key="2">
    <citation type="journal article" date="2012" name="J. Bacteriol.">
        <title>Complete resequencing and reannotation of the Lactobacillus plantarum WCFS1 genome.</title>
        <authorList>
            <person name="Siezen R.J."/>
            <person name="Francke C."/>
            <person name="Renckens B."/>
            <person name="Boekhorst J."/>
            <person name="Wels M."/>
            <person name="Kleerebezem M."/>
            <person name="van Hijum S.A."/>
        </authorList>
    </citation>
    <scope>NUCLEOTIDE SEQUENCE [LARGE SCALE GENOMIC DNA]</scope>
    <scope>GENOME REANNOTATION</scope>
    <source>
        <strain>ATCC BAA-793 / NCIMB 8826 / WCFS1</strain>
    </source>
</reference>
<sequence length="225" mass="25214">MAETKIPRATAKRLPIYYRYLNILLDADKKRVSSTELSEAVKVDSATIRRDFSYFGALGKRGYGYDVETLLAFFKKILNQDTLTNVALIGVGNLGHALLNFNFHKNSNVRISAAFDVNEAIANTVQSGVPVYPMTELKKQLIEQQIEIAILTVPTTVVQKITDDLVDANVKGIMNFTPLRISVPETVRVQNVDLTNELQTLIYFIEHYGQQLGDNGNDDENETED</sequence>
<name>REX_LACPL</name>
<evidence type="ECO:0000255" key="1">
    <source>
        <dbReference type="HAMAP-Rule" id="MF_01131"/>
    </source>
</evidence>
<gene>
    <name evidence="1" type="primary">rex</name>
    <name type="ordered locus">lp_0725</name>
</gene>
<organism>
    <name type="scientific">Lactiplantibacillus plantarum (strain ATCC BAA-793 / NCIMB 8826 / WCFS1)</name>
    <name type="common">Lactobacillus plantarum</name>
    <dbReference type="NCBI Taxonomy" id="220668"/>
    <lineage>
        <taxon>Bacteria</taxon>
        <taxon>Bacillati</taxon>
        <taxon>Bacillota</taxon>
        <taxon>Bacilli</taxon>
        <taxon>Lactobacillales</taxon>
        <taxon>Lactobacillaceae</taxon>
        <taxon>Lactiplantibacillus</taxon>
    </lineage>
</organism>
<keyword id="KW-0963">Cytoplasm</keyword>
<keyword id="KW-0238">DNA-binding</keyword>
<keyword id="KW-0520">NAD</keyword>
<keyword id="KW-1185">Reference proteome</keyword>
<keyword id="KW-0678">Repressor</keyword>
<keyword id="KW-0804">Transcription</keyword>
<keyword id="KW-0805">Transcription regulation</keyword>
<feature type="chain" id="PRO_0000097895" description="Redox-sensing transcriptional repressor Rex">
    <location>
        <begin position="1"/>
        <end position="225"/>
    </location>
</feature>
<feature type="DNA-binding region" description="H-T-H motif" evidence="1">
    <location>
        <begin position="16"/>
        <end position="55"/>
    </location>
</feature>
<feature type="binding site" evidence="1">
    <location>
        <begin position="90"/>
        <end position="95"/>
    </location>
    <ligand>
        <name>NAD(+)</name>
        <dbReference type="ChEBI" id="CHEBI:57540"/>
    </ligand>
</feature>
<accession>Q88YM8</accession>
<accession>F9ULV6</accession>
<comment type="function">
    <text evidence="1">Modulates transcription in response to changes in cellular NADH/NAD(+) redox state.</text>
</comment>
<comment type="subunit">
    <text evidence="1">Homodimer.</text>
</comment>
<comment type="subcellular location">
    <subcellularLocation>
        <location evidence="1">Cytoplasm</location>
    </subcellularLocation>
</comment>
<comment type="similarity">
    <text evidence="1">Belongs to the transcriptional regulatory Rex family.</text>
</comment>
<dbReference type="EMBL" id="AL935263">
    <property type="protein sequence ID" value="CCC78195.1"/>
    <property type="molecule type" value="Genomic_DNA"/>
</dbReference>
<dbReference type="RefSeq" id="WP_003640983.1">
    <property type="nucleotide sequence ID" value="NC_004567.2"/>
</dbReference>
<dbReference type="RefSeq" id="YP_004888709.1">
    <property type="nucleotide sequence ID" value="NC_004567.2"/>
</dbReference>
<dbReference type="SMR" id="Q88YM8"/>
<dbReference type="STRING" id="220668.lp_0725"/>
<dbReference type="EnsemblBacteria" id="CCC78195">
    <property type="protein sequence ID" value="CCC78195"/>
    <property type="gene ID" value="lp_0725"/>
</dbReference>
<dbReference type="KEGG" id="lpl:lp_0725"/>
<dbReference type="PATRIC" id="fig|220668.9.peg.610"/>
<dbReference type="eggNOG" id="COG2344">
    <property type="taxonomic scope" value="Bacteria"/>
</dbReference>
<dbReference type="HOGENOM" id="CLU_061534_1_1_9"/>
<dbReference type="OrthoDB" id="9784760at2"/>
<dbReference type="PhylomeDB" id="Q88YM8"/>
<dbReference type="Proteomes" id="UP000000432">
    <property type="component" value="Chromosome"/>
</dbReference>
<dbReference type="GO" id="GO:0005737">
    <property type="term" value="C:cytoplasm"/>
    <property type="evidence" value="ECO:0007669"/>
    <property type="project" value="UniProtKB-SubCell"/>
</dbReference>
<dbReference type="GO" id="GO:0003677">
    <property type="term" value="F:DNA binding"/>
    <property type="evidence" value="ECO:0007669"/>
    <property type="project" value="UniProtKB-UniRule"/>
</dbReference>
<dbReference type="GO" id="GO:0003700">
    <property type="term" value="F:DNA-binding transcription factor activity"/>
    <property type="evidence" value="ECO:0007669"/>
    <property type="project" value="UniProtKB-UniRule"/>
</dbReference>
<dbReference type="GO" id="GO:0045892">
    <property type="term" value="P:negative regulation of DNA-templated transcription"/>
    <property type="evidence" value="ECO:0007669"/>
    <property type="project" value="InterPro"/>
</dbReference>
<dbReference type="GO" id="GO:0051775">
    <property type="term" value="P:response to redox state"/>
    <property type="evidence" value="ECO:0007669"/>
    <property type="project" value="InterPro"/>
</dbReference>
<dbReference type="Gene3D" id="3.40.50.720">
    <property type="entry name" value="NAD(P)-binding Rossmann-like Domain"/>
    <property type="match status" value="1"/>
</dbReference>
<dbReference type="Gene3D" id="1.10.10.10">
    <property type="entry name" value="Winged helix-like DNA-binding domain superfamily/Winged helix DNA-binding domain"/>
    <property type="match status" value="1"/>
</dbReference>
<dbReference type="HAMAP" id="MF_01131">
    <property type="entry name" value="Rex"/>
    <property type="match status" value="1"/>
</dbReference>
<dbReference type="InterPro" id="IPR003781">
    <property type="entry name" value="CoA-bd"/>
</dbReference>
<dbReference type="InterPro" id="IPR036291">
    <property type="entry name" value="NAD(P)-bd_dom_sf"/>
</dbReference>
<dbReference type="InterPro" id="IPR009718">
    <property type="entry name" value="Rex_DNA-bd_C_dom"/>
</dbReference>
<dbReference type="InterPro" id="IPR022876">
    <property type="entry name" value="Tscrpt_rep_Rex"/>
</dbReference>
<dbReference type="InterPro" id="IPR036388">
    <property type="entry name" value="WH-like_DNA-bd_sf"/>
</dbReference>
<dbReference type="InterPro" id="IPR036390">
    <property type="entry name" value="WH_DNA-bd_sf"/>
</dbReference>
<dbReference type="NCBIfam" id="NF003989">
    <property type="entry name" value="PRK05472.1-3"/>
    <property type="match status" value="1"/>
</dbReference>
<dbReference type="NCBIfam" id="NF003991">
    <property type="entry name" value="PRK05472.1-5"/>
    <property type="match status" value="1"/>
</dbReference>
<dbReference type="NCBIfam" id="NF003994">
    <property type="entry name" value="PRK05472.2-3"/>
    <property type="match status" value="1"/>
</dbReference>
<dbReference type="NCBIfam" id="NF003995">
    <property type="entry name" value="PRK05472.2-4"/>
    <property type="match status" value="1"/>
</dbReference>
<dbReference type="NCBIfam" id="NF003996">
    <property type="entry name" value="PRK05472.2-5"/>
    <property type="match status" value="1"/>
</dbReference>
<dbReference type="PANTHER" id="PTHR35786">
    <property type="entry name" value="REDOX-SENSING TRANSCRIPTIONAL REPRESSOR REX"/>
    <property type="match status" value="1"/>
</dbReference>
<dbReference type="PANTHER" id="PTHR35786:SF1">
    <property type="entry name" value="REDOX-SENSING TRANSCRIPTIONAL REPRESSOR REX 1"/>
    <property type="match status" value="1"/>
</dbReference>
<dbReference type="Pfam" id="PF02629">
    <property type="entry name" value="CoA_binding"/>
    <property type="match status" value="1"/>
</dbReference>
<dbReference type="Pfam" id="PF06971">
    <property type="entry name" value="Put_DNA-bind_N"/>
    <property type="match status" value="1"/>
</dbReference>
<dbReference type="SMART" id="SM00881">
    <property type="entry name" value="CoA_binding"/>
    <property type="match status" value="1"/>
</dbReference>
<dbReference type="SUPFAM" id="SSF51735">
    <property type="entry name" value="NAD(P)-binding Rossmann-fold domains"/>
    <property type="match status" value="1"/>
</dbReference>
<dbReference type="SUPFAM" id="SSF46785">
    <property type="entry name" value="Winged helix' DNA-binding domain"/>
    <property type="match status" value="1"/>
</dbReference>
<protein>
    <recommendedName>
        <fullName evidence="1">Redox-sensing transcriptional repressor Rex</fullName>
    </recommendedName>
</protein>
<proteinExistence type="inferred from homology"/>